<feature type="chain" id="PRO_1000014777" description="Large ribosomal subunit protein bL9">
    <location>
        <begin position="1"/>
        <end position="147"/>
    </location>
</feature>
<gene>
    <name evidence="1" type="primary">rplI</name>
    <name type="ordered locus">FP1849</name>
</gene>
<organism>
    <name type="scientific">Flavobacterium psychrophilum (strain ATCC 49511 / DSM 21280 / CIP 103535 / JIP02/86)</name>
    <dbReference type="NCBI Taxonomy" id="402612"/>
    <lineage>
        <taxon>Bacteria</taxon>
        <taxon>Pseudomonadati</taxon>
        <taxon>Bacteroidota</taxon>
        <taxon>Flavobacteriia</taxon>
        <taxon>Flavobacteriales</taxon>
        <taxon>Flavobacteriaceae</taxon>
        <taxon>Flavobacterium</taxon>
    </lineage>
</organism>
<keyword id="KW-1185">Reference proteome</keyword>
<keyword id="KW-0687">Ribonucleoprotein</keyword>
<keyword id="KW-0689">Ribosomal protein</keyword>
<keyword id="KW-0694">RNA-binding</keyword>
<keyword id="KW-0699">rRNA-binding</keyword>
<reference key="1">
    <citation type="journal article" date="2007" name="Nat. Biotechnol.">
        <title>Complete genome sequence of the fish pathogen Flavobacterium psychrophilum.</title>
        <authorList>
            <person name="Duchaud E."/>
            <person name="Boussaha M."/>
            <person name="Loux V."/>
            <person name="Bernardet J.-F."/>
            <person name="Michel C."/>
            <person name="Kerouault B."/>
            <person name="Mondot S."/>
            <person name="Nicolas P."/>
            <person name="Bossy R."/>
            <person name="Caron C."/>
            <person name="Bessieres P."/>
            <person name="Gibrat J.-F."/>
            <person name="Claverol S."/>
            <person name="Dumetz F."/>
            <person name="Le Henaff M."/>
            <person name="Benmansour A."/>
        </authorList>
    </citation>
    <scope>NUCLEOTIDE SEQUENCE [LARGE SCALE GENOMIC DNA]</scope>
    <source>
        <strain>ATCC 49511 / DSM 21280 / CIP 103535 / JIP02/86</strain>
    </source>
</reference>
<comment type="function">
    <text evidence="1">Binds to the 23S rRNA.</text>
</comment>
<comment type="similarity">
    <text evidence="1">Belongs to the bacterial ribosomal protein bL9 family.</text>
</comment>
<sequence>MELILKQDVQNLGFKDDIVSVKAGYGRNYLIPQGFAHMATSSAKKVLAENLKQRAHKEAKVVADAKTLGDALKAIEIKISAKAGGEKLFGSITNIDIAEALAKGGQSIDRKFITSGIVKRTGKYNASVRLHRDVIVELAYEIVAEQA</sequence>
<evidence type="ECO:0000255" key="1">
    <source>
        <dbReference type="HAMAP-Rule" id="MF_00503"/>
    </source>
</evidence>
<evidence type="ECO:0000305" key="2"/>
<accession>A6H0P1</accession>
<name>RL9_FLAPJ</name>
<dbReference type="EMBL" id="AM398681">
    <property type="protein sequence ID" value="CAL43915.1"/>
    <property type="molecule type" value="Genomic_DNA"/>
</dbReference>
<dbReference type="RefSeq" id="WP_011963954.1">
    <property type="nucleotide sequence ID" value="NC_009613.3"/>
</dbReference>
<dbReference type="RefSeq" id="YP_001296718.1">
    <property type="nucleotide sequence ID" value="NC_009613.3"/>
</dbReference>
<dbReference type="SMR" id="A6H0P1"/>
<dbReference type="STRING" id="402612.FP1849"/>
<dbReference type="EnsemblBacteria" id="CAL43915">
    <property type="protein sequence ID" value="CAL43915"/>
    <property type="gene ID" value="FP1849"/>
</dbReference>
<dbReference type="GeneID" id="66551967"/>
<dbReference type="KEGG" id="fps:FP1849"/>
<dbReference type="PATRIC" id="fig|402612.5.peg.1875"/>
<dbReference type="eggNOG" id="COG0359">
    <property type="taxonomic scope" value="Bacteria"/>
</dbReference>
<dbReference type="HOGENOM" id="CLU_078938_3_0_10"/>
<dbReference type="OrthoDB" id="9788336at2"/>
<dbReference type="Proteomes" id="UP000006394">
    <property type="component" value="Chromosome"/>
</dbReference>
<dbReference type="GO" id="GO:1990904">
    <property type="term" value="C:ribonucleoprotein complex"/>
    <property type="evidence" value="ECO:0007669"/>
    <property type="project" value="UniProtKB-KW"/>
</dbReference>
<dbReference type="GO" id="GO:0005840">
    <property type="term" value="C:ribosome"/>
    <property type="evidence" value="ECO:0007669"/>
    <property type="project" value="UniProtKB-KW"/>
</dbReference>
<dbReference type="GO" id="GO:0019843">
    <property type="term" value="F:rRNA binding"/>
    <property type="evidence" value="ECO:0007669"/>
    <property type="project" value="UniProtKB-UniRule"/>
</dbReference>
<dbReference type="GO" id="GO:0003735">
    <property type="term" value="F:structural constituent of ribosome"/>
    <property type="evidence" value="ECO:0007669"/>
    <property type="project" value="InterPro"/>
</dbReference>
<dbReference type="GO" id="GO:0006412">
    <property type="term" value="P:translation"/>
    <property type="evidence" value="ECO:0007669"/>
    <property type="project" value="UniProtKB-UniRule"/>
</dbReference>
<dbReference type="Gene3D" id="3.10.430.100">
    <property type="entry name" value="Ribosomal protein L9, C-terminal domain"/>
    <property type="match status" value="1"/>
</dbReference>
<dbReference type="Gene3D" id="3.40.5.10">
    <property type="entry name" value="Ribosomal protein L9, N-terminal domain"/>
    <property type="match status" value="1"/>
</dbReference>
<dbReference type="HAMAP" id="MF_00503">
    <property type="entry name" value="Ribosomal_bL9"/>
    <property type="match status" value="1"/>
</dbReference>
<dbReference type="InterPro" id="IPR000244">
    <property type="entry name" value="Ribosomal_bL9"/>
</dbReference>
<dbReference type="InterPro" id="IPR009027">
    <property type="entry name" value="Ribosomal_bL9/RNase_H1_N"/>
</dbReference>
<dbReference type="InterPro" id="IPR020594">
    <property type="entry name" value="Ribosomal_bL9_bac/chp"/>
</dbReference>
<dbReference type="InterPro" id="IPR020069">
    <property type="entry name" value="Ribosomal_bL9_C"/>
</dbReference>
<dbReference type="InterPro" id="IPR036791">
    <property type="entry name" value="Ribosomal_bL9_C_sf"/>
</dbReference>
<dbReference type="InterPro" id="IPR020070">
    <property type="entry name" value="Ribosomal_bL9_N"/>
</dbReference>
<dbReference type="InterPro" id="IPR036935">
    <property type="entry name" value="Ribosomal_bL9_N_sf"/>
</dbReference>
<dbReference type="NCBIfam" id="TIGR00158">
    <property type="entry name" value="L9"/>
    <property type="match status" value="1"/>
</dbReference>
<dbReference type="PANTHER" id="PTHR21368">
    <property type="entry name" value="50S RIBOSOMAL PROTEIN L9"/>
    <property type="match status" value="1"/>
</dbReference>
<dbReference type="Pfam" id="PF03948">
    <property type="entry name" value="Ribosomal_L9_C"/>
    <property type="match status" value="1"/>
</dbReference>
<dbReference type="Pfam" id="PF01281">
    <property type="entry name" value="Ribosomal_L9_N"/>
    <property type="match status" value="1"/>
</dbReference>
<dbReference type="SUPFAM" id="SSF55658">
    <property type="entry name" value="L9 N-domain-like"/>
    <property type="match status" value="1"/>
</dbReference>
<dbReference type="SUPFAM" id="SSF55653">
    <property type="entry name" value="Ribosomal protein L9 C-domain"/>
    <property type="match status" value="1"/>
</dbReference>
<protein>
    <recommendedName>
        <fullName evidence="1">Large ribosomal subunit protein bL9</fullName>
    </recommendedName>
    <alternativeName>
        <fullName evidence="2">50S ribosomal protein L9</fullName>
    </alternativeName>
</protein>
<proteinExistence type="inferred from homology"/>